<comment type="function">
    <text evidence="2 3">Specifically hydrolyzes 7-methylguanosine monophosphate (m(7)GMP) to 7-methylguanosine and inorganic phosphate (PubMed:23223233, PubMed:24603684). Also able to mediate hydrolysis of diphosphate (m(7)GDP) to 7-methylguanosine and 2 inorganic phosphate with lower activity (PubMed:23223233). The specific activity for m(7)GMP may protect cells against undesired salvage of m(7)GMP and its incorporation into nucleic acids (PubMed:23223233). Also has weak activity for CMP (PubMed:23223233, PubMed:24603684). UMP and purine nucleotides are poor substrates (PubMed:23223233, PubMed:24603684).</text>
</comment>
<comment type="catalytic activity">
    <reaction evidence="2 3">
        <text>N(7)-methyl-GMP + H2O = N(7)-methylguanosine + phosphate</text>
        <dbReference type="Rhea" id="RHEA:37107"/>
        <dbReference type="ChEBI" id="CHEBI:15377"/>
        <dbReference type="ChEBI" id="CHEBI:20794"/>
        <dbReference type="ChEBI" id="CHEBI:43474"/>
        <dbReference type="ChEBI" id="CHEBI:58285"/>
        <dbReference type="EC" id="3.1.3.91"/>
    </reaction>
</comment>
<comment type="catalytic activity">
    <reaction evidence="2 3">
        <text>CMP + H2O = cytidine + phosphate</text>
        <dbReference type="Rhea" id="RHEA:29367"/>
        <dbReference type="ChEBI" id="CHEBI:15377"/>
        <dbReference type="ChEBI" id="CHEBI:17562"/>
        <dbReference type="ChEBI" id="CHEBI:43474"/>
        <dbReference type="ChEBI" id="CHEBI:60377"/>
        <dbReference type="EC" id="3.1.3.91"/>
    </reaction>
</comment>
<comment type="catalytic activity">
    <reaction evidence="2 3">
        <text>a ribonucleoside 5'-phosphate + H2O = a ribonucleoside + phosphate</text>
        <dbReference type="Rhea" id="RHEA:12484"/>
        <dbReference type="ChEBI" id="CHEBI:15377"/>
        <dbReference type="ChEBI" id="CHEBI:18254"/>
        <dbReference type="ChEBI" id="CHEBI:43474"/>
        <dbReference type="ChEBI" id="CHEBI:58043"/>
        <dbReference type="EC" id="3.1.3.5"/>
    </reaction>
</comment>
<comment type="cofactor">
    <cofactor evidence="3">
        <name>Mg(2+)</name>
        <dbReference type="ChEBI" id="CHEBI:18420"/>
    </cofactor>
</comment>
<comment type="activity regulation">
    <text evidence="2">Inhibited by high levels of AMP.</text>
</comment>
<comment type="biophysicochemical properties">
    <kinetics>
        <KM evidence="2">13 uM for m(7)GMP (at 25 degrees Celsius)</KM>
        <KM evidence="3">12 uM for m(7)GMP (at 25 degrees Celsius)</KM>
        <KM evidence="2 3">48 uM for CMP (at 25 degrees Celsius)</KM>
        <KM evidence="2">102 uM for GMP (at 25 degrees Celsius)</KM>
        <KM evidence="2">32 uM for AMP (at 25 degrees Celsius)</KM>
        <KM evidence="2">91 uM for UMP (at 25 degrees Celsius)</KM>
        <Vmax evidence="2">11.0 umol/min/mg enzyme with m(7)GMP as substrate</Vmax>
        <Vmax evidence="2">21.0 umol/min/mg enzyme with CMP as substrate</Vmax>
        <Vmax evidence="2">1.5 umol/min/mg enzyme with GMP as substrate</Vmax>
        <Vmax evidence="2">0.49 umol/min/mg enzyme with AMP as substrate</Vmax>
        <Vmax evidence="2">4.0 umol/min/mg enzyme with UMP as substrate</Vmax>
        <text>kcat is 6.3 sec(-1) with m(7)GMP. kcat is 12 sec(-1) with CMP. kcat is 0.88 sec(-1) with GMP. kcat is 0.28 sec(-1) with AMP. kcat is 2.3 sec(-1) with UMP.</text>
    </kinetics>
    <phDependence>
        <text evidence="2">Optimum pH is 7.5.</text>
    </phDependence>
</comment>
<comment type="subunit">
    <text evidence="2">Monomer.</text>
</comment>
<comment type="similarity">
    <text evidence="4">Belongs to the pyrimidine 5'-nucleotidase family.</text>
</comment>
<sequence>MGFDEKREPTGGRLRLQDIPALTQDHCRMRDPAEVERIINEFVIGGPERMQIVSDFDYTITKQRTEDGGAVPSSFGIFNACQSLPENFKAETDKLYHKYRPIEIDPHMPIAEKVQYMIEWWTKSGELTSGFPFDQSEIDQIASKYTHALRDRTHEFFADLQRLGIPTLVFSAGLGNSVVSVLRQANVLHPNVKVVSNFLQFRDGLLDGFQQPMIHTFNKNETVLNETSEYYDLVHTRDHIIVMGDSIGDADMASGVPASSHIMKIGFLFDHVEANMKKYMDTFDIVLVDDQTMDVPRTLLSLIEKQHKLNLEAPKQSSL</sequence>
<gene>
    <name evidence="5" type="primary">cN-IIIB</name>
    <name evidence="5" type="ORF">CG3362</name>
</gene>
<name>5NT3B_DROME</name>
<evidence type="ECO:0000250" key="1">
    <source>
        <dbReference type="UniProtKB" id="Q9H0P0"/>
    </source>
</evidence>
<evidence type="ECO:0000269" key="2">
    <source>
    </source>
</evidence>
<evidence type="ECO:0000269" key="3">
    <source>
    </source>
</evidence>
<evidence type="ECO:0000305" key="4"/>
<evidence type="ECO:0000312" key="5">
    <source>
        <dbReference type="FlyBase" id="FBgn0034988"/>
    </source>
</evidence>
<evidence type="ECO:0007829" key="6">
    <source>
        <dbReference type="PDB" id="4NV0"/>
    </source>
</evidence>
<evidence type="ECO:0007829" key="7">
    <source>
        <dbReference type="PDB" id="4NWI"/>
    </source>
</evidence>
<organism>
    <name type="scientific">Drosophila melanogaster</name>
    <name type="common">Fruit fly</name>
    <dbReference type="NCBI Taxonomy" id="7227"/>
    <lineage>
        <taxon>Eukaryota</taxon>
        <taxon>Metazoa</taxon>
        <taxon>Ecdysozoa</taxon>
        <taxon>Arthropoda</taxon>
        <taxon>Hexapoda</taxon>
        <taxon>Insecta</taxon>
        <taxon>Pterygota</taxon>
        <taxon>Neoptera</taxon>
        <taxon>Endopterygota</taxon>
        <taxon>Diptera</taxon>
        <taxon>Brachycera</taxon>
        <taxon>Muscomorpha</taxon>
        <taxon>Ephydroidea</taxon>
        <taxon>Drosophilidae</taxon>
        <taxon>Drosophila</taxon>
        <taxon>Sophophora</taxon>
    </lineage>
</organism>
<protein>
    <recommendedName>
        <fullName>7-methylguanosine phosphate-specific 5'-nucleotidase</fullName>
        <shortName>7-methylguanosine nucleotidase</shortName>
        <ecNumber evidence="2 3">3.1.3.91</ecNumber>
    </recommendedName>
    <alternativeName>
        <fullName evidence="5">Cytosolic 5'-nucleotidase IIIB</fullName>
        <ecNumber evidence="2 3">3.1.3.5</ecNumber>
    </alternativeName>
    <alternativeName>
        <fullName>N(7)-methylguanylate 5'-phosphatase</fullName>
    </alternativeName>
</protein>
<reference key="1">
    <citation type="journal article" date="2000" name="Science">
        <title>The genome sequence of Drosophila melanogaster.</title>
        <authorList>
            <person name="Adams M.D."/>
            <person name="Celniker S.E."/>
            <person name="Holt R.A."/>
            <person name="Evans C.A."/>
            <person name="Gocayne J.D."/>
            <person name="Amanatides P.G."/>
            <person name="Scherer S.E."/>
            <person name="Li P.W."/>
            <person name="Hoskins R.A."/>
            <person name="Galle R.F."/>
            <person name="George R.A."/>
            <person name="Lewis S.E."/>
            <person name="Richards S."/>
            <person name="Ashburner M."/>
            <person name="Henderson S.N."/>
            <person name="Sutton G.G."/>
            <person name="Wortman J.R."/>
            <person name="Yandell M.D."/>
            <person name="Zhang Q."/>
            <person name="Chen L.X."/>
            <person name="Brandon R.C."/>
            <person name="Rogers Y.-H.C."/>
            <person name="Blazej R.G."/>
            <person name="Champe M."/>
            <person name="Pfeiffer B.D."/>
            <person name="Wan K.H."/>
            <person name="Doyle C."/>
            <person name="Baxter E.G."/>
            <person name="Helt G."/>
            <person name="Nelson C.R."/>
            <person name="Miklos G.L.G."/>
            <person name="Abril J.F."/>
            <person name="Agbayani A."/>
            <person name="An H.-J."/>
            <person name="Andrews-Pfannkoch C."/>
            <person name="Baldwin D."/>
            <person name="Ballew R.M."/>
            <person name="Basu A."/>
            <person name="Baxendale J."/>
            <person name="Bayraktaroglu L."/>
            <person name="Beasley E.M."/>
            <person name="Beeson K.Y."/>
            <person name="Benos P.V."/>
            <person name="Berman B.P."/>
            <person name="Bhandari D."/>
            <person name="Bolshakov S."/>
            <person name="Borkova D."/>
            <person name="Botchan M.R."/>
            <person name="Bouck J."/>
            <person name="Brokstein P."/>
            <person name="Brottier P."/>
            <person name="Burtis K.C."/>
            <person name="Busam D.A."/>
            <person name="Butler H."/>
            <person name="Cadieu E."/>
            <person name="Center A."/>
            <person name="Chandra I."/>
            <person name="Cherry J.M."/>
            <person name="Cawley S."/>
            <person name="Dahlke C."/>
            <person name="Davenport L.B."/>
            <person name="Davies P."/>
            <person name="de Pablos B."/>
            <person name="Delcher A."/>
            <person name="Deng Z."/>
            <person name="Mays A.D."/>
            <person name="Dew I."/>
            <person name="Dietz S.M."/>
            <person name="Dodson K."/>
            <person name="Doup L.E."/>
            <person name="Downes M."/>
            <person name="Dugan-Rocha S."/>
            <person name="Dunkov B.C."/>
            <person name="Dunn P."/>
            <person name="Durbin K.J."/>
            <person name="Evangelista C.C."/>
            <person name="Ferraz C."/>
            <person name="Ferriera S."/>
            <person name="Fleischmann W."/>
            <person name="Fosler C."/>
            <person name="Gabrielian A.E."/>
            <person name="Garg N.S."/>
            <person name="Gelbart W.M."/>
            <person name="Glasser K."/>
            <person name="Glodek A."/>
            <person name="Gong F."/>
            <person name="Gorrell J.H."/>
            <person name="Gu Z."/>
            <person name="Guan P."/>
            <person name="Harris M."/>
            <person name="Harris N.L."/>
            <person name="Harvey D.A."/>
            <person name="Heiman T.J."/>
            <person name="Hernandez J.R."/>
            <person name="Houck J."/>
            <person name="Hostin D."/>
            <person name="Houston K.A."/>
            <person name="Howland T.J."/>
            <person name="Wei M.-H."/>
            <person name="Ibegwam C."/>
            <person name="Jalali M."/>
            <person name="Kalush F."/>
            <person name="Karpen G.H."/>
            <person name="Ke Z."/>
            <person name="Kennison J.A."/>
            <person name="Ketchum K.A."/>
            <person name="Kimmel B.E."/>
            <person name="Kodira C.D."/>
            <person name="Kraft C.L."/>
            <person name="Kravitz S."/>
            <person name="Kulp D."/>
            <person name="Lai Z."/>
            <person name="Lasko P."/>
            <person name="Lei Y."/>
            <person name="Levitsky A.A."/>
            <person name="Li J.H."/>
            <person name="Li Z."/>
            <person name="Liang Y."/>
            <person name="Lin X."/>
            <person name="Liu X."/>
            <person name="Mattei B."/>
            <person name="McIntosh T.C."/>
            <person name="McLeod M.P."/>
            <person name="McPherson D."/>
            <person name="Merkulov G."/>
            <person name="Milshina N.V."/>
            <person name="Mobarry C."/>
            <person name="Morris J."/>
            <person name="Moshrefi A."/>
            <person name="Mount S.M."/>
            <person name="Moy M."/>
            <person name="Murphy B."/>
            <person name="Murphy L."/>
            <person name="Muzny D.M."/>
            <person name="Nelson D.L."/>
            <person name="Nelson D.R."/>
            <person name="Nelson K.A."/>
            <person name="Nixon K."/>
            <person name="Nusskern D.R."/>
            <person name="Pacleb J.M."/>
            <person name="Palazzolo M."/>
            <person name="Pittman G.S."/>
            <person name="Pan S."/>
            <person name="Pollard J."/>
            <person name="Puri V."/>
            <person name="Reese M.G."/>
            <person name="Reinert K."/>
            <person name="Remington K."/>
            <person name="Saunders R.D.C."/>
            <person name="Scheeler F."/>
            <person name="Shen H."/>
            <person name="Shue B.C."/>
            <person name="Siden-Kiamos I."/>
            <person name="Simpson M."/>
            <person name="Skupski M.P."/>
            <person name="Smith T.J."/>
            <person name="Spier E."/>
            <person name="Spradling A.C."/>
            <person name="Stapleton M."/>
            <person name="Strong R."/>
            <person name="Sun E."/>
            <person name="Svirskas R."/>
            <person name="Tector C."/>
            <person name="Turner R."/>
            <person name="Venter E."/>
            <person name="Wang A.H."/>
            <person name="Wang X."/>
            <person name="Wang Z.-Y."/>
            <person name="Wassarman D.A."/>
            <person name="Weinstock G.M."/>
            <person name="Weissenbach J."/>
            <person name="Williams S.M."/>
            <person name="Woodage T."/>
            <person name="Worley K.C."/>
            <person name="Wu D."/>
            <person name="Yang S."/>
            <person name="Yao Q.A."/>
            <person name="Ye J."/>
            <person name="Yeh R.-F."/>
            <person name="Zaveri J.S."/>
            <person name="Zhan M."/>
            <person name="Zhang G."/>
            <person name="Zhao Q."/>
            <person name="Zheng L."/>
            <person name="Zheng X.H."/>
            <person name="Zhong F.N."/>
            <person name="Zhong W."/>
            <person name="Zhou X."/>
            <person name="Zhu S.C."/>
            <person name="Zhu X."/>
            <person name="Smith H.O."/>
            <person name="Gibbs R.A."/>
            <person name="Myers E.W."/>
            <person name="Rubin G.M."/>
            <person name="Venter J.C."/>
        </authorList>
    </citation>
    <scope>NUCLEOTIDE SEQUENCE [LARGE SCALE GENOMIC DNA]</scope>
    <source>
        <strain>Berkeley</strain>
    </source>
</reference>
<reference key="2">
    <citation type="journal article" date="2002" name="Genome Biol.">
        <title>Annotation of the Drosophila melanogaster euchromatic genome: a systematic review.</title>
        <authorList>
            <person name="Misra S."/>
            <person name="Crosby M.A."/>
            <person name="Mungall C.J."/>
            <person name="Matthews B.B."/>
            <person name="Campbell K.S."/>
            <person name="Hradecky P."/>
            <person name="Huang Y."/>
            <person name="Kaminker J.S."/>
            <person name="Millburn G.H."/>
            <person name="Prochnik S.E."/>
            <person name="Smith C.D."/>
            <person name="Tupy J.L."/>
            <person name="Whitfield E.J."/>
            <person name="Bayraktaroglu L."/>
            <person name="Berman B.P."/>
            <person name="Bettencourt B.R."/>
            <person name="Celniker S.E."/>
            <person name="de Grey A.D.N.J."/>
            <person name="Drysdale R.A."/>
            <person name="Harris N.L."/>
            <person name="Richter J."/>
            <person name="Russo S."/>
            <person name="Schroeder A.J."/>
            <person name="Shu S.Q."/>
            <person name="Stapleton M."/>
            <person name="Yamada C."/>
            <person name="Ashburner M."/>
            <person name="Gelbart W.M."/>
            <person name="Rubin G.M."/>
            <person name="Lewis S.E."/>
        </authorList>
    </citation>
    <scope>GENOME REANNOTATION</scope>
    <source>
        <strain>Berkeley</strain>
    </source>
</reference>
<reference key="3">
    <citation type="journal article" date="2002" name="Genome Biol.">
        <title>A Drosophila full-length cDNA resource.</title>
        <authorList>
            <person name="Stapleton M."/>
            <person name="Carlson J.W."/>
            <person name="Brokstein P."/>
            <person name="Yu C."/>
            <person name="Champe M."/>
            <person name="George R.A."/>
            <person name="Guarin H."/>
            <person name="Kronmiller B."/>
            <person name="Pacleb J.M."/>
            <person name="Park S."/>
            <person name="Wan K.H."/>
            <person name="Rubin G.M."/>
            <person name="Celniker S.E."/>
        </authorList>
    </citation>
    <scope>NUCLEOTIDE SEQUENCE [LARGE SCALE MRNA]</scope>
    <source>
        <strain>Berkeley</strain>
        <tissue>Embryo</tissue>
    </source>
</reference>
<reference key="4">
    <citation type="journal article" date="2013" name="J. Biol. Chem.">
        <title>Identification of Drosophila and Human 7-Methyl GMP-specific Nucleotidases.</title>
        <authorList>
            <person name="Buschmann J."/>
            <person name="Moritz B."/>
            <person name="Jeske M."/>
            <person name="Lilie H."/>
            <person name="Schierhorn A."/>
            <person name="Wahle E."/>
        </authorList>
    </citation>
    <scope>FUNCTION</scope>
    <scope>CATALYTIC ACTIVITY</scope>
    <scope>BIOPHYSICOCHEMICAL PROPERTIES</scope>
    <scope>ACTIVITY REGULATION</scope>
    <scope>SUBUNIT</scope>
</reference>
<reference key="5">
    <citation type="journal article" date="2014" name="PLoS ONE">
        <title>Crystal structures of the novel cytosolic 5'-nucleotidase IIIB explain its preference for m7GMP.</title>
        <authorList>
            <person name="Monecke T."/>
            <person name="Buschmann J."/>
            <person name="Neumann P."/>
            <person name="Wahle E."/>
            <person name="Ficner R."/>
        </authorList>
    </citation>
    <scope>X-RAY CRYSTALLOGRAPHY (1.65 ANGSTROMS) IN COMPLEX WITH REACTION PRODUCTS</scope>
    <scope>FUNCTION</scope>
    <scope>CATALYTIC ACTIVITY</scope>
    <scope>COFACTOR</scope>
    <scope>BIOPHYSICOCHEMICAL PROPERTIES</scope>
    <scope>ACTIVE SITE</scope>
    <scope>METAL BINDING</scope>
    <scope>MUTAGENESIS OF PHE-75; GLY-76; TRP-121 AND 75-PHE--GLY-76</scope>
</reference>
<keyword id="KW-0002">3D-structure</keyword>
<keyword id="KW-0378">Hydrolase</keyword>
<keyword id="KW-0460">Magnesium</keyword>
<keyword id="KW-0479">Metal-binding</keyword>
<keyword id="KW-0546">Nucleotide metabolism</keyword>
<keyword id="KW-0547">Nucleotide-binding</keyword>
<keyword id="KW-1185">Reference proteome</keyword>
<proteinExistence type="evidence at protein level"/>
<dbReference type="EC" id="3.1.3.91" evidence="2 3"/>
<dbReference type="EC" id="3.1.3.5" evidence="2 3"/>
<dbReference type="EMBL" id="AE013599">
    <property type="protein sequence ID" value="AAF47180.1"/>
    <property type="molecule type" value="Genomic_DNA"/>
</dbReference>
<dbReference type="EMBL" id="AY061358">
    <property type="protein sequence ID" value="AAL28906.1"/>
    <property type="molecule type" value="mRNA"/>
</dbReference>
<dbReference type="RefSeq" id="NP_611895.1">
    <property type="nucleotide sequence ID" value="NM_138051.4"/>
</dbReference>
<dbReference type="PDB" id="4NV0">
    <property type="method" value="X-ray"/>
    <property type="resolution" value="1.65 A"/>
    <property type="chains" value="A/B=1-319"/>
</dbReference>
<dbReference type="PDB" id="4NWI">
    <property type="method" value="X-ray"/>
    <property type="resolution" value="2.05 A"/>
    <property type="chains" value="A/B=1-319"/>
</dbReference>
<dbReference type="PDBsum" id="4NV0"/>
<dbReference type="PDBsum" id="4NWI"/>
<dbReference type="SMR" id="Q9W197"/>
<dbReference type="BioGRID" id="63451">
    <property type="interactions" value="1"/>
</dbReference>
<dbReference type="FunCoup" id="Q9W197">
    <property type="interactions" value="715"/>
</dbReference>
<dbReference type="IntAct" id="Q9W197">
    <property type="interactions" value="3"/>
</dbReference>
<dbReference type="STRING" id="7227.FBpp0072168"/>
<dbReference type="PaxDb" id="7227-FBpp0072168"/>
<dbReference type="DNASU" id="37875"/>
<dbReference type="EnsemblMetazoa" id="FBtr0072261">
    <property type="protein sequence ID" value="FBpp0072168"/>
    <property type="gene ID" value="FBgn0034988"/>
</dbReference>
<dbReference type="GeneID" id="37875"/>
<dbReference type="KEGG" id="dme:Dmel_CG3362"/>
<dbReference type="UCSC" id="CG3362-RA">
    <property type="organism name" value="d. melanogaster"/>
</dbReference>
<dbReference type="AGR" id="FB:FBgn0034988"/>
<dbReference type="CTD" id="37875"/>
<dbReference type="FlyBase" id="FBgn0034988">
    <property type="gene designation" value="cN-IIIB"/>
</dbReference>
<dbReference type="VEuPathDB" id="VectorBase:FBgn0034988"/>
<dbReference type="eggNOG" id="KOG3128">
    <property type="taxonomic scope" value="Eukaryota"/>
</dbReference>
<dbReference type="GeneTree" id="ENSGT00390000012959"/>
<dbReference type="HOGENOM" id="CLU_048584_0_2_1"/>
<dbReference type="InParanoid" id="Q9W197"/>
<dbReference type="OMA" id="GPERMQI"/>
<dbReference type="OrthoDB" id="10014216at2759"/>
<dbReference type="PhylomeDB" id="Q9W197"/>
<dbReference type="BRENDA" id="3.1.3.91">
    <property type="organism ID" value="1994"/>
</dbReference>
<dbReference type="Reactome" id="R-DME-429958">
    <property type="pathway name" value="mRNA decay by 3' to 5' exoribonuclease"/>
</dbReference>
<dbReference type="Reactome" id="R-DME-73621">
    <property type="pathway name" value="Pyrimidine catabolism"/>
</dbReference>
<dbReference type="SABIO-RK" id="Q9W197"/>
<dbReference type="BioGRID-ORCS" id="37875">
    <property type="hits" value="0 hits in 3 CRISPR screens"/>
</dbReference>
<dbReference type="EvolutionaryTrace" id="Q9W197"/>
<dbReference type="GenomeRNAi" id="37875"/>
<dbReference type="PRO" id="PR:Q9W197"/>
<dbReference type="Proteomes" id="UP000000803">
    <property type="component" value="Chromosome 2R"/>
</dbReference>
<dbReference type="Bgee" id="FBgn0034988">
    <property type="expression patterns" value="Expressed in thoracico-abdominal ganglion (Drosophila) and 59 other cell types or tissues"/>
</dbReference>
<dbReference type="GO" id="GO:0005737">
    <property type="term" value="C:cytoplasm"/>
    <property type="evidence" value="ECO:0000318"/>
    <property type="project" value="GO_Central"/>
</dbReference>
<dbReference type="GO" id="GO:0005829">
    <property type="term" value="C:cytosol"/>
    <property type="evidence" value="ECO:0000314"/>
    <property type="project" value="FlyBase"/>
</dbReference>
<dbReference type="GO" id="GO:0008253">
    <property type="term" value="F:5'-nucleotidase activity"/>
    <property type="evidence" value="ECO:0000314"/>
    <property type="project" value="FlyBase"/>
</dbReference>
<dbReference type="GO" id="GO:0000287">
    <property type="term" value="F:magnesium ion binding"/>
    <property type="evidence" value="ECO:0007669"/>
    <property type="project" value="InterPro"/>
</dbReference>
<dbReference type="GO" id="GO:0008252">
    <property type="term" value="F:nucleotidase activity"/>
    <property type="evidence" value="ECO:0000314"/>
    <property type="project" value="FlyBase"/>
</dbReference>
<dbReference type="GO" id="GO:0000166">
    <property type="term" value="F:nucleotide binding"/>
    <property type="evidence" value="ECO:0007669"/>
    <property type="project" value="UniProtKB-KW"/>
</dbReference>
<dbReference type="GO" id="GO:1901069">
    <property type="term" value="P:guanosine-containing compound catabolic process"/>
    <property type="evidence" value="ECO:0000314"/>
    <property type="project" value="FlyBase"/>
</dbReference>
<dbReference type="GO" id="GO:0009117">
    <property type="term" value="P:nucleotide metabolic process"/>
    <property type="evidence" value="ECO:0007669"/>
    <property type="project" value="UniProtKB-KW"/>
</dbReference>
<dbReference type="GO" id="GO:0009158">
    <property type="term" value="P:ribonucleoside monophosphate catabolic process"/>
    <property type="evidence" value="ECO:0000314"/>
    <property type="project" value="FlyBase"/>
</dbReference>
<dbReference type="CDD" id="cd07504">
    <property type="entry name" value="HAD_5NT"/>
    <property type="match status" value="1"/>
</dbReference>
<dbReference type="FunFam" id="1.10.150.340:FF:000001">
    <property type="entry name" value="Cytosolic 5-nucleotidase 3-like"/>
    <property type="match status" value="1"/>
</dbReference>
<dbReference type="FunFam" id="3.40.50.1000:FF:000032">
    <property type="entry name" value="Cytosolic 5-nucleotidase 3-like"/>
    <property type="match status" value="1"/>
</dbReference>
<dbReference type="Gene3D" id="3.40.50.1000">
    <property type="entry name" value="HAD superfamily/HAD-like"/>
    <property type="match status" value="1"/>
</dbReference>
<dbReference type="Gene3D" id="1.10.150.340">
    <property type="entry name" value="Pyrimidine 5'-nucleotidase (UMPH-1), N-terminal domain"/>
    <property type="match status" value="1"/>
</dbReference>
<dbReference type="InterPro" id="IPR036412">
    <property type="entry name" value="HAD-like_sf"/>
</dbReference>
<dbReference type="InterPro" id="IPR023214">
    <property type="entry name" value="HAD_sf"/>
</dbReference>
<dbReference type="InterPro" id="IPR006434">
    <property type="entry name" value="Pyrimidine_nucleotidase_eu"/>
</dbReference>
<dbReference type="NCBIfam" id="TIGR01544">
    <property type="entry name" value="HAD-SF-IE"/>
    <property type="match status" value="1"/>
</dbReference>
<dbReference type="PANTHER" id="PTHR13045">
    <property type="entry name" value="5'-NUCLEOTIDASE"/>
    <property type="match status" value="1"/>
</dbReference>
<dbReference type="PANTHER" id="PTHR13045:SF0">
    <property type="entry name" value="7-METHYLGUANOSINE PHOSPHATE-SPECIFIC 5'-NUCLEOTIDASE"/>
    <property type="match status" value="1"/>
</dbReference>
<dbReference type="Pfam" id="PF05822">
    <property type="entry name" value="UMPH-1"/>
    <property type="match status" value="1"/>
</dbReference>
<dbReference type="SFLD" id="SFLDG01128">
    <property type="entry name" value="C1.4:_5'-Nucleotidase_Like"/>
    <property type="match status" value="1"/>
</dbReference>
<dbReference type="SFLD" id="SFLDS00003">
    <property type="entry name" value="Haloacid_Dehalogenase"/>
    <property type="match status" value="1"/>
</dbReference>
<dbReference type="SUPFAM" id="SSF56784">
    <property type="entry name" value="HAD-like"/>
    <property type="match status" value="1"/>
</dbReference>
<feature type="chain" id="PRO_0000421994" description="7-methylguanosine phosphate-specific 5'-nucleotidase">
    <location>
        <begin position="1"/>
        <end position="319"/>
    </location>
</feature>
<feature type="active site" description="Nucleophile" evidence="3">
    <location>
        <position position="55"/>
    </location>
</feature>
<feature type="active site" description="Proton donor" evidence="3">
    <location>
        <position position="57"/>
    </location>
</feature>
<feature type="binding site" evidence="3">
    <location>
        <position position="55"/>
    </location>
    <ligand>
        <name>Mg(2+)</name>
        <dbReference type="ChEBI" id="CHEBI:18420"/>
    </ligand>
</feature>
<feature type="binding site" evidence="3">
    <location>
        <position position="57"/>
    </location>
    <ligand>
        <name>Mg(2+)</name>
        <dbReference type="ChEBI" id="CHEBI:18420"/>
    </ligand>
</feature>
<feature type="binding site" evidence="3">
    <location>
        <position position="103"/>
    </location>
    <ligand>
        <name>CMP</name>
        <dbReference type="ChEBI" id="CHEBI:60377"/>
    </ligand>
</feature>
<feature type="binding site" evidence="3">
    <location>
        <position position="103"/>
    </location>
    <ligand>
        <name>N(7)-methyl-GMP</name>
        <dbReference type="ChEBI" id="CHEBI:58285"/>
    </ligand>
</feature>
<feature type="binding site" evidence="3">
    <location>
        <position position="124"/>
    </location>
    <ligand>
        <name>N(7)-methyl-GMP</name>
        <dbReference type="ChEBI" id="CHEBI:58285"/>
    </ligand>
</feature>
<feature type="binding site" evidence="1">
    <location>
        <begin position="171"/>
        <end position="172"/>
    </location>
    <ligand>
        <name>substrate</name>
    </ligand>
</feature>
<feature type="binding site" evidence="3">
    <location>
        <position position="245"/>
    </location>
    <ligand>
        <name>Mg(2+)</name>
        <dbReference type="ChEBI" id="CHEBI:18420"/>
    </ligand>
</feature>
<feature type="mutagenesis site" description="Increases KM 7-fold for CMP; when associated with Trp-121." evidence="3">
    <original>FG</original>
    <variation>HN</variation>
    <location>
        <begin position="75"/>
        <end position="76"/>
    </location>
</feature>
<feature type="mutagenesis site" description="Increases KM 3-fold for m(7)GMP and increases KM 10-fold for CMP. Decreases KM 6-fold for m(7)GMP and increases KM 2-fold for CMP; when associated with Trp-121." evidence="3">
    <original>F</original>
    <variation>H</variation>
    <location>
        <position position="75"/>
    </location>
</feature>
<feature type="mutagenesis site" description="Decreases KM 6-fold for m(7)GMP. Decreases KM 1.5-fold for m(7)GMP and increases KM 1.5-fold for CMP; when associated with Trp-121." evidence="3">
    <original>G</original>
    <variation>N</variation>
    <location>
        <position position="76"/>
    </location>
</feature>
<feature type="mutagenesis site" description="Considerable increase (12-fold) in KM for m(7)GMP and decreases KM 3-fold for CMP. Decreases KM 6-fold for m(7)GMP and increases KM 2-fold for CMP; when associated with His-75. Decreases KM 1.5-fold for m(7)GMP and increases KM 1.5-fold for CMP; when associated with Asn-76. Increases KM 7-fold for CMP; when associated with 75-His--Asn-76.">
    <original>W</original>
    <variation>Y</variation>
    <location>
        <position position="121"/>
    </location>
</feature>
<feature type="helix" evidence="6">
    <location>
        <begin position="16"/>
        <end position="18"/>
    </location>
</feature>
<feature type="helix" evidence="6">
    <location>
        <begin position="20"/>
        <end position="23"/>
    </location>
</feature>
<feature type="helix" evidence="6">
    <location>
        <begin position="32"/>
        <end position="45"/>
    </location>
</feature>
<feature type="helix" evidence="6">
    <location>
        <begin position="47"/>
        <end position="49"/>
    </location>
</feature>
<feature type="strand" evidence="6">
    <location>
        <begin position="50"/>
        <end position="54"/>
    </location>
</feature>
<feature type="turn" evidence="6">
    <location>
        <begin position="57"/>
        <end position="59"/>
    </location>
</feature>
<feature type="strand" evidence="7">
    <location>
        <begin position="66"/>
        <end position="68"/>
    </location>
</feature>
<feature type="helix" evidence="6">
    <location>
        <begin position="74"/>
        <end position="79"/>
    </location>
</feature>
<feature type="strand" evidence="7">
    <location>
        <begin position="82"/>
        <end position="84"/>
    </location>
</feature>
<feature type="helix" evidence="6">
    <location>
        <begin position="88"/>
        <end position="103"/>
    </location>
</feature>
<feature type="strand" evidence="6">
    <location>
        <begin position="106"/>
        <end position="108"/>
    </location>
</feature>
<feature type="helix" evidence="6">
    <location>
        <begin position="110"/>
        <end position="127"/>
    </location>
</feature>
<feature type="strand" evidence="6">
    <location>
        <begin position="128"/>
        <end position="131"/>
    </location>
</feature>
<feature type="helix" evidence="6">
    <location>
        <begin position="135"/>
        <end position="142"/>
    </location>
</feature>
<feature type="helix" evidence="6">
    <location>
        <begin position="143"/>
        <end position="148"/>
    </location>
</feature>
<feature type="helix" evidence="6">
    <location>
        <begin position="153"/>
        <end position="163"/>
    </location>
</feature>
<feature type="strand" evidence="6">
    <location>
        <begin position="167"/>
        <end position="174"/>
    </location>
</feature>
<feature type="helix" evidence="6">
    <location>
        <begin position="175"/>
        <end position="184"/>
    </location>
</feature>
<feature type="strand" evidence="6">
    <location>
        <begin position="192"/>
        <end position="197"/>
    </location>
</feature>
<feature type="strand" evidence="6">
    <location>
        <begin position="199"/>
        <end position="202"/>
    </location>
</feature>
<feature type="strand" evidence="6">
    <location>
        <begin position="205"/>
        <end position="209"/>
    </location>
</feature>
<feature type="turn" evidence="6">
    <location>
        <begin position="221"/>
        <end position="223"/>
    </location>
</feature>
<feature type="helix" evidence="6">
    <location>
        <begin position="231"/>
        <end position="234"/>
    </location>
</feature>
<feature type="strand" evidence="6">
    <location>
        <begin position="239"/>
        <end position="246"/>
    </location>
</feature>
<feature type="helix" evidence="6">
    <location>
        <begin position="247"/>
        <end position="249"/>
    </location>
</feature>
<feature type="turn" evidence="6">
    <location>
        <begin position="250"/>
        <end position="255"/>
    </location>
</feature>
<feature type="strand" evidence="6">
    <location>
        <begin position="261"/>
        <end position="268"/>
    </location>
</feature>
<feature type="helix" evidence="6">
    <location>
        <begin position="272"/>
        <end position="282"/>
    </location>
</feature>
<feature type="strand" evidence="6">
    <location>
        <begin position="284"/>
        <end position="289"/>
    </location>
</feature>
<feature type="helix" evidence="6">
    <location>
        <begin position="294"/>
        <end position="310"/>
    </location>
</feature>
<accession>Q9W197</accession>